<reference key="1">
    <citation type="journal article" date="2006" name="Proc. Natl. Acad. Sci. U.S.A.">
        <title>Comparative genomics of the lactic acid bacteria.</title>
        <authorList>
            <person name="Makarova K.S."/>
            <person name="Slesarev A."/>
            <person name="Wolf Y.I."/>
            <person name="Sorokin A."/>
            <person name="Mirkin B."/>
            <person name="Koonin E.V."/>
            <person name="Pavlov A."/>
            <person name="Pavlova N."/>
            <person name="Karamychev V."/>
            <person name="Polouchine N."/>
            <person name="Shakhova V."/>
            <person name="Grigoriev I."/>
            <person name="Lou Y."/>
            <person name="Rohksar D."/>
            <person name="Lucas S."/>
            <person name="Huang K."/>
            <person name="Goodstein D.M."/>
            <person name="Hawkins T."/>
            <person name="Plengvidhya V."/>
            <person name="Welker D."/>
            <person name="Hughes J."/>
            <person name="Goh Y."/>
            <person name="Benson A."/>
            <person name="Baldwin K."/>
            <person name="Lee J.-H."/>
            <person name="Diaz-Muniz I."/>
            <person name="Dosti B."/>
            <person name="Smeianov V."/>
            <person name="Wechter W."/>
            <person name="Barabote R."/>
            <person name="Lorca G."/>
            <person name="Altermann E."/>
            <person name="Barrangou R."/>
            <person name="Ganesan B."/>
            <person name="Xie Y."/>
            <person name="Rawsthorne H."/>
            <person name="Tamir D."/>
            <person name="Parker C."/>
            <person name="Breidt F."/>
            <person name="Broadbent J.R."/>
            <person name="Hutkins R."/>
            <person name="O'Sullivan D."/>
            <person name="Steele J."/>
            <person name="Unlu G."/>
            <person name="Saier M.H. Jr."/>
            <person name="Klaenhammer T."/>
            <person name="Richardson P."/>
            <person name="Kozyavkin S."/>
            <person name="Weimer B.C."/>
            <person name="Mills D.A."/>
        </authorList>
    </citation>
    <scope>NUCLEOTIDE SEQUENCE [LARGE SCALE GENOMIC DNA]</scope>
    <source>
        <strain>ATCC BAA-331 / PSU-1</strain>
    </source>
</reference>
<feature type="chain" id="PRO_1000006287" description="Serine hydroxymethyltransferase">
    <location>
        <begin position="1"/>
        <end position="414"/>
    </location>
</feature>
<feature type="binding site" evidence="1">
    <location>
        <position position="116"/>
    </location>
    <ligand>
        <name>(6S)-5,6,7,8-tetrahydrofolate</name>
        <dbReference type="ChEBI" id="CHEBI:57453"/>
    </ligand>
</feature>
<feature type="binding site" evidence="1">
    <location>
        <begin position="120"/>
        <end position="122"/>
    </location>
    <ligand>
        <name>(6S)-5,6,7,8-tetrahydrofolate</name>
        <dbReference type="ChEBI" id="CHEBI:57453"/>
    </ligand>
</feature>
<feature type="binding site" evidence="1">
    <location>
        <begin position="349"/>
        <end position="351"/>
    </location>
    <ligand>
        <name>(6S)-5,6,7,8-tetrahydrofolate</name>
        <dbReference type="ChEBI" id="CHEBI:57453"/>
    </ligand>
</feature>
<feature type="site" description="Plays an important role in substrate specificity" evidence="1">
    <location>
        <position position="224"/>
    </location>
</feature>
<feature type="modified residue" description="N6-(pyridoxal phosphate)lysine" evidence="1">
    <location>
        <position position="225"/>
    </location>
</feature>
<gene>
    <name evidence="1" type="primary">glyA</name>
    <name type="ordered locus">OEOE_0778</name>
</gene>
<proteinExistence type="inferred from homology"/>
<organism>
    <name type="scientific">Oenococcus oeni (strain ATCC BAA-331 / PSU-1)</name>
    <dbReference type="NCBI Taxonomy" id="203123"/>
    <lineage>
        <taxon>Bacteria</taxon>
        <taxon>Bacillati</taxon>
        <taxon>Bacillota</taxon>
        <taxon>Bacilli</taxon>
        <taxon>Lactobacillales</taxon>
        <taxon>Lactobacillaceae</taxon>
        <taxon>Oenococcus</taxon>
    </lineage>
</organism>
<evidence type="ECO:0000255" key="1">
    <source>
        <dbReference type="HAMAP-Rule" id="MF_00051"/>
    </source>
</evidence>
<name>GLYA_OENOB</name>
<dbReference type="EC" id="2.1.2.1" evidence="1"/>
<dbReference type="EMBL" id="CP000411">
    <property type="protein sequence ID" value="ABJ56705.1"/>
    <property type="molecule type" value="Genomic_DNA"/>
</dbReference>
<dbReference type="RefSeq" id="WP_011677551.1">
    <property type="nucleotide sequence ID" value="NC_008528.1"/>
</dbReference>
<dbReference type="SMR" id="Q04FR7"/>
<dbReference type="STRING" id="203123.OEOE_0778"/>
<dbReference type="KEGG" id="ooe:OEOE_0778"/>
<dbReference type="PATRIC" id="fig|203123.7.peg.792"/>
<dbReference type="eggNOG" id="COG0112">
    <property type="taxonomic scope" value="Bacteria"/>
</dbReference>
<dbReference type="HOGENOM" id="CLU_022477_2_1_9"/>
<dbReference type="UniPathway" id="UPA00193"/>
<dbReference type="UniPathway" id="UPA00288">
    <property type="reaction ID" value="UER01023"/>
</dbReference>
<dbReference type="Proteomes" id="UP000000774">
    <property type="component" value="Chromosome"/>
</dbReference>
<dbReference type="GO" id="GO:0005829">
    <property type="term" value="C:cytosol"/>
    <property type="evidence" value="ECO:0007669"/>
    <property type="project" value="TreeGrafter"/>
</dbReference>
<dbReference type="GO" id="GO:0004372">
    <property type="term" value="F:glycine hydroxymethyltransferase activity"/>
    <property type="evidence" value="ECO:0007669"/>
    <property type="project" value="UniProtKB-UniRule"/>
</dbReference>
<dbReference type="GO" id="GO:0030170">
    <property type="term" value="F:pyridoxal phosphate binding"/>
    <property type="evidence" value="ECO:0007669"/>
    <property type="project" value="UniProtKB-UniRule"/>
</dbReference>
<dbReference type="GO" id="GO:0019264">
    <property type="term" value="P:glycine biosynthetic process from serine"/>
    <property type="evidence" value="ECO:0007669"/>
    <property type="project" value="UniProtKB-UniRule"/>
</dbReference>
<dbReference type="GO" id="GO:0035999">
    <property type="term" value="P:tetrahydrofolate interconversion"/>
    <property type="evidence" value="ECO:0007669"/>
    <property type="project" value="UniProtKB-UniRule"/>
</dbReference>
<dbReference type="CDD" id="cd00378">
    <property type="entry name" value="SHMT"/>
    <property type="match status" value="1"/>
</dbReference>
<dbReference type="FunFam" id="3.40.640.10:FF:000001">
    <property type="entry name" value="Serine hydroxymethyltransferase"/>
    <property type="match status" value="1"/>
</dbReference>
<dbReference type="Gene3D" id="3.90.1150.10">
    <property type="entry name" value="Aspartate Aminotransferase, domain 1"/>
    <property type="match status" value="1"/>
</dbReference>
<dbReference type="Gene3D" id="3.40.640.10">
    <property type="entry name" value="Type I PLP-dependent aspartate aminotransferase-like (Major domain)"/>
    <property type="match status" value="1"/>
</dbReference>
<dbReference type="HAMAP" id="MF_00051">
    <property type="entry name" value="SHMT"/>
    <property type="match status" value="1"/>
</dbReference>
<dbReference type="InterPro" id="IPR015424">
    <property type="entry name" value="PyrdxlP-dep_Trfase"/>
</dbReference>
<dbReference type="InterPro" id="IPR015421">
    <property type="entry name" value="PyrdxlP-dep_Trfase_major"/>
</dbReference>
<dbReference type="InterPro" id="IPR015422">
    <property type="entry name" value="PyrdxlP-dep_Trfase_small"/>
</dbReference>
<dbReference type="InterPro" id="IPR001085">
    <property type="entry name" value="Ser_HO-MeTrfase"/>
</dbReference>
<dbReference type="InterPro" id="IPR049943">
    <property type="entry name" value="Ser_HO-MeTrfase-like"/>
</dbReference>
<dbReference type="InterPro" id="IPR039429">
    <property type="entry name" value="SHMT-like_dom"/>
</dbReference>
<dbReference type="NCBIfam" id="NF000586">
    <property type="entry name" value="PRK00011.1"/>
    <property type="match status" value="1"/>
</dbReference>
<dbReference type="PANTHER" id="PTHR11680">
    <property type="entry name" value="SERINE HYDROXYMETHYLTRANSFERASE"/>
    <property type="match status" value="1"/>
</dbReference>
<dbReference type="PANTHER" id="PTHR11680:SF35">
    <property type="entry name" value="SERINE HYDROXYMETHYLTRANSFERASE 1"/>
    <property type="match status" value="1"/>
</dbReference>
<dbReference type="Pfam" id="PF00464">
    <property type="entry name" value="SHMT"/>
    <property type="match status" value="1"/>
</dbReference>
<dbReference type="PIRSF" id="PIRSF000412">
    <property type="entry name" value="SHMT"/>
    <property type="match status" value="1"/>
</dbReference>
<dbReference type="SUPFAM" id="SSF53383">
    <property type="entry name" value="PLP-dependent transferases"/>
    <property type="match status" value="1"/>
</dbReference>
<keyword id="KW-0028">Amino-acid biosynthesis</keyword>
<keyword id="KW-0963">Cytoplasm</keyword>
<keyword id="KW-0554">One-carbon metabolism</keyword>
<keyword id="KW-0663">Pyridoxal phosphate</keyword>
<keyword id="KW-1185">Reference proteome</keyword>
<keyword id="KW-0808">Transferase</keyword>
<accession>Q04FR7</accession>
<comment type="function">
    <text evidence="1">Catalyzes the reversible interconversion of serine and glycine with tetrahydrofolate (THF) serving as the one-carbon carrier. This reaction serves as the major source of one-carbon groups required for the biosynthesis of purines, thymidylate, methionine, and other important biomolecules. Also exhibits THF-independent aldolase activity toward beta-hydroxyamino acids, producing glycine and aldehydes, via a retro-aldol mechanism.</text>
</comment>
<comment type="catalytic activity">
    <reaction evidence="1">
        <text>(6R)-5,10-methylene-5,6,7,8-tetrahydrofolate + glycine + H2O = (6S)-5,6,7,8-tetrahydrofolate + L-serine</text>
        <dbReference type="Rhea" id="RHEA:15481"/>
        <dbReference type="ChEBI" id="CHEBI:15377"/>
        <dbReference type="ChEBI" id="CHEBI:15636"/>
        <dbReference type="ChEBI" id="CHEBI:33384"/>
        <dbReference type="ChEBI" id="CHEBI:57305"/>
        <dbReference type="ChEBI" id="CHEBI:57453"/>
        <dbReference type="EC" id="2.1.2.1"/>
    </reaction>
</comment>
<comment type="cofactor">
    <cofactor evidence="1">
        <name>pyridoxal 5'-phosphate</name>
        <dbReference type="ChEBI" id="CHEBI:597326"/>
    </cofactor>
</comment>
<comment type="pathway">
    <text evidence="1">One-carbon metabolism; tetrahydrofolate interconversion.</text>
</comment>
<comment type="pathway">
    <text evidence="1">Amino-acid biosynthesis; glycine biosynthesis; glycine from L-serine: step 1/1.</text>
</comment>
<comment type="subunit">
    <text evidence="1">Homodimer.</text>
</comment>
<comment type="subcellular location">
    <subcellularLocation>
        <location evidence="1">Cytoplasm</location>
    </subcellularLocation>
</comment>
<comment type="similarity">
    <text evidence="1">Belongs to the SHMT family.</text>
</comment>
<protein>
    <recommendedName>
        <fullName evidence="1">Serine hydroxymethyltransferase</fullName>
        <shortName evidence="1">SHMT</shortName>
        <shortName evidence="1">Serine methylase</shortName>
        <ecNumber evidence="1">2.1.2.1</ecNumber>
    </recommendedName>
</protein>
<sequence length="414" mass="45431">MTKNFLDPQLAKAVSGEEERQRHNIELVASENFVSKAVRQAQGSVLTNKYSEGYPGKRYYGGNEYIDIAENLAIERAKELFGVSYANVQPHSGSSANFEAYMAFLHPGDKILGMNLDSGGHLTHGASVSFSGKMYEAQSYKVDSETELLDYDAILKQAKEFKPNLIIAGASAYSRTIDFQAFRDIADEVNAYLMVDIAHIAGLIAAGLHPSPVGLADIITTTTHKTLRGPCGGMILADEKYAKRINSAVFPGSQGGPLDHVVAAKAAAFYEDLQPDFKTYSAQIIKNAKTMADAFSKEPDVRVVSGGTDNHMFTLDLTKTGLNGRQVQDLLDSVSITLNREALPNEKRSPFVTSGVRIGTPAMTTKGLKENEMLQIEHLIMRAIHAHDDKNELTKIKRDVFDLMDKFPFDSNPF</sequence>